<name>RS17_CHLTA</name>
<keyword id="KW-0687">Ribonucleoprotein</keyword>
<keyword id="KW-0689">Ribosomal protein</keyword>
<keyword id="KW-0694">RNA-binding</keyword>
<keyword id="KW-0699">rRNA-binding</keyword>
<gene>
    <name evidence="1" type="primary">rpsQ</name>
    <name type="ordered locus">CTA_0568</name>
</gene>
<organism>
    <name type="scientific">Chlamydia trachomatis serovar A (strain ATCC VR-571B / DSM 19440 / HAR-13)</name>
    <dbReference type="NCBI Taxonomy" id="315277"/>
    <lineage>
        <taxon>Bacteria</taxon>
        <taxon>Pseudomonadati</taxon>
        <taxon>Chlamydiota</taxon>
        <taxon>Chlamydiia</taxon>
        <taxon>Chlamydiales</taxon>
        <taxon>Chlamydiaceae</taxon>
        <taxon>Chlamydia/Chlamydophila group</taxon>
        <taxon>Chlamydia</taxon>
    </lineage>
</organism>
<comment type="function">
    <text evidence="1">One of the primary rRNA binding proteins, it binds specifically to the 5'-end of 16S ribosomal RNA.</text>
</comment>
<comment type="subunit">
    <text evidence="1">Part of the 30S ribosomal subunit.</text>
</comment>
<comment type="similarity">
    <text evidence="1">Belongs to the universal ribosomal protein uS17 family.</text>
</comment>
<dbReference type="EMBL" id="CP000051">
    <property type="protein sequence ID" value="AAX50794.1"/>
    <property type="molecule type" value="Genomic_DNA"/>
</dbReference>
<dbReference type="RefSeq" id="WP_009871883.1">
    <property type="nucleotide sequence ID" value="NC_007429.1"/>
</dbReference>
<dbReference type="SMR" id="Q3KLH8"/>
<dbReference type="GeneID" id="93065358"/>
<dbReference type="KEGG" id="cta:CTA_0568"/>
<dbReference type="HOGENOM" id="CLU_073626_1_0_0"/>
<dbReference type="Proteomes" id="UP000002532">
    <property type="component" value="Chromosome"/>
</dbReference>
<dbReference type="GO" id="GO:0022627">
    <property type="term" value="C:cytosolic small ribosomal subunit"/>
    <property type="evidence" value="ECO:0007669"/>
    <property type="project" value="TreeGrafter"/>
</dbReference>
<dbReference type="GO" id="GO:0019843">
    <property type="term" value="F:rRNA binding"/>
    <property type="evidence" value="ECO:0007669"/>
    <property type="project" value="UniProtKB-UniRule"/>
</dbReference>
<dbReference type="GO" id="GO:0003735">
    <property type="term" value="F:structural constituent of ribosome"/>
    <property type="evidence" value="ECO:0007669"/>
    <property type="project" value="InterPro"/>
</dbReference>
<dbReference type="GO" id="GO:0006412">
    <property type="term" value="P:translation"/>
    <property type="evidence" value="ECO:0007669"/>
    <property type="project" value="UniProtKB-UniRule"/>
</dbReference>
<dbReference type="CDD" id="cd00364">
    <property type="entry name" value="Ribosomal_uS17"/>
    <property type="match status" value="1"/>
</dbReference>
<dbReference type="FunFam" id="2.40.50.140:FF:000462">
    <property type="entry name" value="30S ribosomal protein S17"/>
    <property type="match status" value="1"/>
</dbReference>
<dbReference type="Gene3D" id="2.40.50.140">
    <property type="entry name" value="Nucleic acid-binding proteins"/>
    <property type="match status" value="1"/>
</dbReference>
<dbReference type="HAMAP" id="MF_01345_B">
    <property type="entry name" value="Ribosomal_uS17_B"/>
    <property type="match status" value="1"/>
</dbReference>
<dbReference type="InterPro" id="IPR012340">
    <property type="entry name" value="NA-bd_OB-fold"/>
</dbReference>
<dbReference type="InterPro" id="IPR000266">
    <property type="entry name" value="Ribosomal_uS17"/>
</dbReference>
<dbReference type="InterPro" id="IPR019984">
    <property type="entry name" value="Ribosomal_uS17_bact/chlr"/>
</dbReference>
<dbReference type="InterPro" id="IPR019979">
    <property type="entry name" value="Ribosomal_uS17_CS"/>
</dbReference>
<dbReference type="NCBIfam" id="NF004123">
    <property type="entry name" value="PRK05610.1"/>
    <property type="match status" value="1"/>
</dbReference>
<dbReference type="NCBIfam" id="TIGR03635">
    <property type="entry name" value="uS17_bact"/>
    <property type="match status" value="1"/>
</dbReference>
<dbReference type="PANTHER" id="PTHR10744">
    <property type="entry name" value="40S RIBOSOMAL PROTEIN S11 FAMILY MEMBER"/>
    <property type="match status" value="1"/>
</dbReference>
<dbReference type="PANTHER" id="PTHR10744:SF1">
    <property type="entry name" value="SMALL RIBOSOMAL SUBUNIT PROTEIN US17M"/>
    <property type="match status" value="1"/>
</dbReference>
<dbReference type="Pfam" id="PF00366">
    <property type="entry name" value="Ribosomal_S17"/>
    <property type="match status" value="1"/>
</dbReference>
<dbReference type="PRINTS" id="PR00973">
    <property type="entry name" value="RIBOSOMALS17"/>
</dbReference>
<dbReference type="SUPFAM" id="SSF50249">
    <property type="entry name" value="Nucleic acid-binding proteins"/>
    <property type="match status" value="1"/>
</dbReference>
<dbReference type="PROSITE" id="PS00056">
    <property type="entry name" value="RIBOSOMAL_S17"/>
    <property type="match status" value="1"/>
</dbReference>
<evidence type="ECO:0000255" key="1">
    <source>
        <dbReference type="HAMAP-Rule" id="MF_01345"/>
    </source>
</evidence>
<evidence type="ECO:0000305" key="2"/>
<proteinExistence type="inferred from homology"/>
<accession>Q3KLH8</accession>
<feature type="chain" id="PRO_0000233454" description="Small ribosomal subunit protein uS17">
    <location>
        <begin position="1"/>
        <end position="83"/>
    </location>
</feature>
<protein>
    <recommendedName>
        <fullName evidence="1">Small ribosomal subunit protein uS17</fullName>
    </recommendedName>
    <alternativeName>
        <fullName evidence="2">30S ribosomal protein S17</fullName>
    </alternativeName>
</protein>
<reference key="1">
    <citation type="journal article" date="2005" name="Infect. Immun.">
        <title>Comparative genomic analysis of Chlamydia trachomatis oculotropic and genitotropic strains.</title>
        <authorList>
            <person name="Carlson J.H."/>
            <person name="Porcella S.F."/>
            <person name="McClarty G."/>
            <person name="Caldwell H.D."/>
        </authorList>
    </citation>
    <scope>NUCLEOTIDE SEQUENCE [LARGE SCALE GENOMIC DNA]</scope>
    <source>
        <strain>ATCC VR-571B / DSM 19440 / HAR-13</strain>
    </source>
</reference>
<sequence>MASDVRGRRKTKIGVVVSSKMEKTVVVRVERVYSHPQYAKVVRDSSKYYAHNELDVKEGDTVRIQETRPLSKTKRWRVVGRVN</sequence>